<feature type="chain" id="PRO_1000093859" description="Holo-[acyl-carrier-protein] synthase">
    <location>
        <begin position="1"/>
        <end position="146"/>
    </location>
</feature>
<feature type="binding site" evidence="1">
    <location>
        <position position="9"/>
    </location>
    <ligand>
        <name>Mg(2+)</name>
        <dbReference type="ChEBI" id="CHEBI:18420"/>
    </ligand>
</feature>
<feature type="binding site" evidence="1">
    <location>
        <position position="63"/>
    </location>
    <ligand>
        <name>Mg(2+)</name>
        <dbReference type="ChEBI" id="CHEBI:18420"/>
    </ligand>
</feature>
<reference key="1">
    <citation type="submission" date="2008-02" db="EMBL/GenBank/DDBJ databases">
        <title>Complete sequence of chromosome 1 of Burkholderia cenocepacia MC0-3.</title>
        <authorList>
            <person name="Copeland A."/>
            <person name="Lucas S."/>
            <person name="Lapidus A."/>
            <person name="Barry K."/>
            <person name="Bruce D."/>
            <person name="Goodwin L."/>
            <person name="Glavina del Rio T."/>
            <person name="Dalin E."/>
            <person name="Tice H."/>
            <person name="Pitluck S."/>
            <person name="Chain P."/>
            <person name="Malfatti S."/>
            <person name="Shin M."/>
            <person name="Vergez L."/>
            <person name="Schmutz J."/>
            <person name="Larimer F."/>
            <person name="Land M."/>
            <person name="Hauser L."/>
            <person name="Kyrpides N."/>
            <person name="Mikhailova N."/>
            <person name="Tiedje J."/>
            <person name="Richardson P."/>
        </authorList>
    </citation>
    <scope>NUCLEOTIDE SEQUENCE [LARGE SCALE GENOMIC DNA]</scope>
    <source>
        <strain>MC0-3</strain>
    </source>
</reference>
<keyword id="KW-0963">Cytoplasm</keyword>
<keyword id="KW-0275">Fatty acid biosynthesis</keyword>
<keyword id="KW-0276">Fatty acid metabolism</keyword>
<keyword id="KW-0444">Lipid biosynthesis</keyword>
<keyword id="KW-0443">Lipid metabolism</keyword>
<keyword id="KW-0460">Magnesium</keyword>
<keyword id="KW-0479">Metal-binding</keyword>
<keyword id="KW-0808">Transferase</keyword>
<comment type="function">
    <text evidence="1">Transfers the 4'-phosphopantetheine moiety from coenzyme A to a Ser of acyl-carrier-protein.</text>
</comment>
<comment type="catalytic activity">
    <reaction evidence="1">
        <text>apo-[ACP] + CoA = holo-[ACP] + adenosine 3',5'-bisphosphate + H(+)</text>
        <dbReference type="Rhea" id="RHEA:12068"/>
        <dbReference type="Rhea" id="RHEA-COMP:9685"/>
        <dbReference type="Rhea" id="RHEA-COMP:9690"/>
        <dbReference type="ChEBI" id="CHEBI:15378"/>
        <dbReference type="ChEBI" id="CHEBI:29999"/>
        <dbReference type="ChEBI" id="CHEBI:57287"/>
        <dbReference type="ChEBI" id="CHEBI:58343"/>
        <dbReference type="ChEBI" id="CHEBI:64479"/>
        <dbReference type="EC" id="2.7.8.7"/>
    </reaction>
</comment>
<comment type="cofactor">
    <cofactor evidence="1">
        <name>Mg(2+)</name>
        <dbReference type="ChEBI" id="CHEBI:18420"/>
    </cofactor>
</comment>
<comment type="subcellular location">
    <subcellularLocation>
        <location evidence="1">Cytoplasm</location>
    </subcellularLocation>
</comment>
<comment type="similarity">
    <text evidence="1">Belongs to the P-Pant transferase superfamily. AcpS family.</text>
</comment>
<sequence length="146" mass="15629">MAIYGIGTDIAQVSRVAAVLERTGGRFAEKVLGPDELRVFHARRARSEARGIAFLATRFSAKEAFSKAIGLGMHWPMTWRALQTLNHPSGEPYVVASGELADWLAARGITARVTVSDERDYAVSFVVAETDAAPAPAAAPVSRTSS</sequence>
<protein>
    <recommendedName>
        <fullName evidence="1">Holo-[acyl-carrier-protein] synthase</fullName>
        <shortName evidence="1">Holo-ACP synthase</shortName>
        <ecNumber evidence="1">2.7.8.7</ecNumber>
    </recommendedName>
    <alternativeName>
        <fullName evidence="1">4'-phosphopantetheinyl transferase AcpS</fullName>
    </alternativeName>
</protein>
<organism>
    <name type="scientific">Burkholderia orbicola (strain MC0-3)</name>
    <dbReference type="NCBI Taxonomy" id="406425"/>
    <lineage>
        <taxon>Bacteria</taxon>
        <taxon>Pseudomonadati</taxon>
        <taxon>Pseudomonadota</taxon>
        <taxon>Betaproteobacteria</taxon>
        <taxon>Burkholderiales</taxon>
        <taxon>Burkholderiaceae</taxon>
        <taxon>Burkholderia</taxon>
        <taxon>Burkholderia cepacia complex</taxon>
        <taxon>Burkholderia orbicola</taxon>
    </lineage>
</organism>
<dbReference type="EC" id="2.7.8.7" evidence="1"/>
<dbReference type="EMBL" id="CP000958">
    <property type="protein sequence ID" value="ACA90273.1"/>
    <property type="molecule type" value="Genomic_DNA"/>
</dbReference>
<dbReference type="RefSeq" id="WP_006476490.1">
    <property type="nucleotide sequence ID" value="NC_010508.1"/>
</dbReference>
<dbReference type="SMR" id="B1JYB7"/>
<dbReference type="GeneID" id="83047890"/>
<dbReference type="KEGG" id="bcm:Bcenmc03_1096"/>
<dbReference type="HOGENOM" id="CLU_089696_3_1_4"/>
<dbReference type="Proteomes" id="UP000002169">
    <property type="component" value="Chromosome 1"/>
</dbReference>
<dbReference type="GO" id="GO:0005737">
    <property type="term" value="C:cytoplasm"/>
    <property type="evidence" value="ECO:0007669"/>
    <property type="project" value="UniProtKB-SubCell"/>
</dbReference>
<dbReference type="GO" id="GO:0008897">
    <property type="term" value="F:holo-[acyl-carrier-protein] synthase activity"/>
    <property type="evidence" value="ECO:0007669"/>
    <property type="project" value="UniProtKB-UniRule"/>
</dbReference>
<dbReference type="GO" id="GO:0000287">
    <property type="term" value="F:magnesium ion binding"/>
    <property type="evidence" value="ECO:0007669"/>
    <property type="project" value="UniProtKB-UniRule"/>
</dbReference>
<dbReference type="GO" id="GO:0006633">
    <property type="term" value="P:fatty acid biosynthetic process"/>
    <property type="evidence" value="ECO:0007669"/>
    <property type="project" value="UniProtKB-UniRule"/>
</dbReference>
<dbReference type="Gene3D" id="3.90.470.20">
    <property type="entry name" value="4'-phosphopantetheinyl transferase domain"/>
    <property type="match status" value="1"/>
</dbReference>
<dbReference type="HAMAP" id="MF_00101">
    <property type="entry name" value="AcpS"/>
    <property type="match status" value="1"/>
</dbReference>
<dbReference type="InterPro" id="IPR008278">
    <property type="entry name" value="4-PPantetheinyl_Trfase_dom"/>
</dbReference>
<dbReference type="InterPro" id="IPR037143">
    <property type="entry name" value="4-PPantetheinyl_Trfase_dom_sf"/>
</dbReference>
<dbReference type="InterPro" id="IPR002582">
    <property type="entry name" value="ACPS"/>
</dbReference>
<dbReference type="InterPro" id="IPR004568">
    <property type="entry name" value="Ppantetheine-prot_Trfase_dom"/>
</dbReference>
<dbReference type="NCBIfam" id="TIGR00516">
    <property type="entry name" value="acpS"/>
    <property type="match status" value="1"/>
</dbReference>
<dbReference type="NCBIfam" id="TIGR00556">
    <property type="entry name" value="pantethn_trn"/>
    <property type="match status" value="1"/>
</dbReference>
<dbReference type="Pfam" id="PF01648">
    <property type="entry name" value="ACPS"/>
    <property type="match status" value="1"/>
</dbReference>
<dbReference type="SUPFAM" id="SSF56214">
    <property type="entry name" value="4'-phosphopantetheinyl transferase"/>
    <property type="match status" value="1"/>
</dbReference>
<proteinExistence type="inferred from homology"/>
<accession>B1JYB7</accession>
<gene>
    <name evidence="1" type="primary">acpS</name>
    <name type="ordered locus">Bcenmc03_1096</name>
</gene>
<name>ACPS_BURO0</name>
<evidence type="ECO:0000255" key="1">
    <source>
        <dbReference type="HAMAP-Rule" id="MF_00101"/>
    </source>
</evidence>